<keyword id="KW-0903">Direct protein sequencing</keyword>
<keyword id="KW-0964">Secreted</keyword>
<organism>
    <name type="scientific">Sphex argentatus argentatus</name>
    <name type="common">Black digger wasp</name>
    <dbReference type="NCBI Taxonomy" id="2838366"/>
    <lineage>
        <taxon>Eukaryota</taxon>
        <taxon>Metazoa</taxon>
        <taxon>Ecdysozoa</taxon>
        <taxon>Arthropoda</taxon>
        <taxon>Hexapoda</taxon>
        <taxon>Insecta</taxon>
        <taxon>Pterygota</taxon>
        <taxon>Neoptera</taxon>
        <taxon>Endopterygota</taxon>
        <taxon>Hymenoptera</taxon>
        <taxon>Apocrita</taxon>
        <taxon>Aculeata</taxon>
        <taxon>Apoidea</taxon>
        <taxon>Sphecidae</taxon>
        <taxon>Sphecinae</taxon>
        <taxon>Sphecina</taxon>
        <taxon>Sphex</taxon>
    </lineage>
</organism>
<comment type="subcellular location">
    <subcellularLocation>
        <location evidence="1">Secreted</location>
    </subcellularLocation>
</comment>
<comment type="tissue specificity">
    <text evidence="4">Expressed by the venom gland.</text>
</comment>
<comment type="mass spectrometry" mass="1379.6" method="MALDI" evidence="1">
    <text>Monoisotopic mass.</text>
</comment>
<comment type="similarity">
    <text evidence="3">Belongs to the SA81-like family.</text>
</comment>
<sequence length="12" mass="1380">EDDLEDFNPTVS</sequence>
<accession>P0DUU6</accession>
<dbReference type="GO" id="GO:0005576">
    <property type="term" value="C:extracellular region"/>
    <property type="evidence" value="ECO:0007669"/>
    <property type="project" value="UniProtKB-SubCell"/>
</dbReference>
<feature type="peptide" id="PRO_0000453645" description="Venom peptide Sa81" evidence="1">
    <location>
        <begin position="1"/>
        <end position="12"/>
    </location>
</feature>
<protein>
    <recommendedName>
        <fullName evidence="2">Venom peptide Sa81</fullName>
    </recommendedName>
</protein>
<evidence type="ECO:0000269" key="1">
    <source>
    </source>
</evidence>
<evidence type="ECO:0000303" key="2">
    <source>
    </source>
</evidence>
<evidence type="ECO:0000305" key="3"/>
<evidence type="ECO:0000305" key="4">
    <source>
    </source>
</evidence>
<proteinExistence type="evidence at protein level"/>
<name>VP81_SPHAA</name>
<reference key="1">
    <citation type="journal article" date="2021" name="Peptides">
        <title>Isolation and characterization of FMRFamide-like peptides in the venoms of solitary sphecid wasps.</title>
        <authorList>
            <person name="Nihei K.I."/>
            <person name="Peigneur S."/>
            <person name="Tytgat J."/>
            <person name="Lange A.B."/>
            <person name="Konno K."/>
        </authorList>
    </citation>
    <scope>PROTEIN SEQUENCE</scope>
    <scope>SUBCELLULAR LOCATION</scope>
    <scope>MASS SPECTROMETRY</scope>
    <source>
        <tissue>Venom</tissue>
    </source>
</reference>